<sequence>MLAAMGSLAAALWAVVHPRTLLLGTVAFLLAADFLKRRRPKNYPPGPWRLPFLGNFFLVDFEQSHLEVQLFVKKYGNLFSLELGDISAVLITGLPLIKEALIHMDQNFGNRPVTPMREHIFKKNGLIMSSGQAWKEQRRFTLTALRNFGLGKKSLEERIQEEAQHLTEAIKEENGQPFDPHFKINNAVSNIICSITFGERFEYQDSWFQQLLKLLDEVTYLEASKTCQLYNVFPWIMKFLPGPHQTLFSNWKKLKLFVSHMIDKHRKDWNPAETRDFIDAYLKEMSKHTGNPTSSFHEENLICSTLDLFFAGTETTSTTLRWALLYMALYPEIQEKVQAEIDRVIGQGQQPSTAARESMPYTNAVIHEVQRMGNIIPLNVPREVTVDTTLAGYHLPKGTMILTNLTALHRDPTEWATPDTFNPDHFLENGQFKKREAFMPFSIGKRACLGEQLARTELFIFFTSLMQKFTFRPPNNEKLSLKFRMGITISPVSHRLCAVPQV</sequence>
<accession>P51589</accession>
<accession>B2RD33</accession>
<accession>Q8TF13</accession>
<dbReference type="EC" id="1.14.14.-" evidence="7"/>
<dbReference type="EC" id="1.14.14.74" evidence="6"/>
<dbReference type="EC" id="1.14.14.73" evidence="4"/>
<dbReference type="EC" id="5.4.4.7" evidence="3"/>
<dbReference type="EMBL" id="U37143">
    <property type="protein sequence ID" value="AAC50370.2"/>
    <property type="molecule type" value="mRNA"/>
</dbReference>
<dbReference type="EMBL" id="AB080265">
    <property type="protein sequence ID" value="BAB85489.1"/>
    <property type="molecule type" value="mRNA"/>
</dbReference>
<dbReference type="EMBL" id="AF272142">
    <property type="protein sequence ID" value="AAM44456.1"/>
    <property type="molecule type" value="Genomic_DNA"/>
</dbReference>
<dbReference type="EMBL" id="AY426985">
    <property type="protein sequence ID" value="AAQ93356.1"/>
    <property type="molecule type" value="Genomic_DNA"/>
</dbReference>
<dbReference type="EMBL" id="AK315387">
    <property type="protein sequence ID" value="BAG37780.1"/>
    <property type="molecule type" value="mRNA"/>
</dbReference>
<dbReference type="EMBL" id="BC032594">
    <property type="protein sequence ID" value="AAH32594.1"/>
    <property type="molecule type" value="mRNA"/>
</dbReference>
<dbReference type="CCDS" id="CCDS613.1"/>
<dbReference type="RefSeq" id="NP_000766.2">
    <property type="nucleotide sequence ID" value="NM_000775.3"/>
</dbReference>
<dbReference type="SMR" id="P51589"/>
<dbReference type="BioGRID" id="107946">
    <property type="interactions" value="30"/>
</dbReference>
<dbReference type="FunCoup" id="P51589">
    <property type="interactions" value="560"/>
</dbReference>
<dbReference type="IntAct" id="P51589">
    <property type="interactions" value="27"/>
</dbReference>
<dbReference type="STRING" id="9606.ENSP00000360247"/>
<dbReference type="BindingDB" id="P51589"/>
<dbReference type="ChEMBL" id="CHEMBL3491"/>
<dbReference type="DrugBank" id="DB01118">
    <property type="generic name" value="Amiodarone"/>
</dbReference>
<dbReference type="DrugBank" id="DB06605">
    <property type="generic name" value="Apixaban"/>
</dbReference>
<dbReference type="DrugBank" id="DB00637">
    <property type="generic name" value="Astemizole"/>
</dbReference>
<dbReference type="DrugBank" id="DB09061">
    <property type="generic name" value="Cannabidiol"/>
</dbReference>
<dbReference type="DrugBank" id="DB14737">
    <property type="generic name" value="Cannabinol"/>
</dbReference>
<dbReference type="DrugBank" id="DB00169">
    <property type="generic name" value="Cholecalciferol"/>
</dbReference>
<dbReference type="DrugBank" id="DB00470">
    <property type="generic name" value="Dronabinol"/>
</dbReference>
<dbReference type="DrugBank" id="DB04855">
    <property type="generic name" value="Dronedarone"/>
</dbReference>
<dbReference type="DrugBank" id="DB05187">
    <property type="generic name" value="Elafibranor"/>
</dbReference>
<dbReference type="DrugBank" id="DB14766">
    <property type="generic name" value="Etrasimod"/>
</dbReference>
<dbReference type="DrugBank" id="DB09148">
    <property type="generic name" value="Florbetaben F-18"/>
</dbReference>
<dbReference type="DrugBank" id="DB08918">
    <property type="generic name" value="Levomilnacipran"/>
</dbReference>
<dbReference type="DrugBank" id="DB04725">
    <property type="generic name" value="Licofelone"/>
</dbReference>
<dbReference type="DrugBank" id="DB14009">
    <property type="generic name" value="Medical Cannabis"/>
</dbReference>
<dbReference type="DrugBank" id="DB00486">
    <property type="generic name" value="Nabilone"/>
</dbReference>
<dbReference type="DrugBank" id="DB12513">
    <property type="generic name" value="Omaveloxolone"/>
</dbReference>
<dbReference type="DrugBank" id="DB05316">
    <property type="generic name" value="Pimavanserin"/>
</dbReference>
<dbReference type="DrugBank" id="DB12016">
    <property type="generic name" value="Ponesimod"/>
</dbReference>
<dbReference type="DrugBank" id="DB08931">
    <property type="generic name" value="Riociguat"/>
</dbReference>
<dbReference type="DrugBank" id="DB15305">
    <property type="generic name" value="Risdiplam"/>
</dbReference>
<dbReference type="DrugBank" id="DB06228">
    <property type="generic name" value="Rivaroxaban"/>
</dbReference>
<dbReference type="DrugBank" id="DB00342">
    <property type="generic name" value="Terfenadine"/>
</dbReference>
<dbReference type="DrugBank" id="DB09030">
    <property type="generic name" value="Vorapaxar"/>
</dbReference>
<dbReference type="DrugCentral" id="P51589"/>
<dbReference type="GuidetoPHARMACOLOGY" id="1332"/>
<dbReference type="SwissLipids" id="SLP:000001594"/>
<dbReference type="iPTMnet" id="P51589"/>
<dbReference type="PhosphoSitePlus" id="P51589"/>
<dbReference type="BioMuta" id="CYP2J2"/>
<dbReference type="DMDM" id="21264413"/>
<dbReference type="jPOST" id="P51589"/>
<dbReference type="MassIVE" id="P51589"/>
<dbReference type="PaxDb" id="9606-ENSP00000360247"/>
<dbReference type="PeptideAtlas" id="P51589"/>
<dbReference type="ProteomicsDB" id="56341"/>
<dbReference type="Pumba" id="P51589"/>
<dbReference type="Antibodypedia" id="33278">
    <property type="antibodies" value="377 antibodies from 32 providers"/>
</dbReference>
<dbReference type="DNASU" id="1573"/>
<dbReference type="Ensembl" id="ENST00000371204.4">
    <property type="protein sequence ID" value="ENSP00000360247.3"/>
    <property type="gene ID" value="ENSG00000134716.11"/>
</dbReference>
<dbReference type="GeneID" id="1573"/>
<dbReference type="KEGG" id="hsa:1573"/>
<dbReference type="MANE-Select" id="ENST00000371204.4">
    <property type="protein sequence ID" value="ENSP00000360247.3"/>
    <property type="RefSeq nucleotide sequence ID" value="NM_000775.4"/>
    <property type="RefSeq protein sequence ID" value="NP_000766.2"/>
</dbReference>
<dbReference type="UCSC" id="uc001czq.4">
    <property type="organism name" value="human"/>
</dbReference>
<dbReference type="AGR" id="HGNC:2634"/>
<dbReference type="CTD" id="1573"/>
<dbReference type="DisGeNET" id="1573"/>
<dbReference type="GeneCards" id="CYP2J2"/>
<dbReference type="HGNC" id="HGNC:2634">
    <property type="gene designation" value="CYP2J2"/>
</dbReference>
<dbReference type="HPA" id="ENSG00000134716">
    <property type="expression patterns" value="Group enriched (heart muscle, intestine, liver)"/>
</dbReference>
<dbReference type="MIM" id="601258">
    <property type="type" value="gene"/>
</dbReference>
<dbReference type="neXtProt" id="NX_P51589"/>
<dbReference type="OpenTargets" id="ENSG00000134716"/>
<dbReference type="PharmGKB" id="PA27112"/>
<dbReference type="VEuPathDB" id="HostDB:ENSG00000134716"/>
<dbReference type="eggNOG" id="KOG0156">
    <property type="taxonomic scope" value="Eukaryota"/>
</dbReference>
<dbReference type="GeneTree" id="ENSGT00940000155417"/>
<dbReference type="HOGENOM" id="CLU_001570_22_0_1"/>
<dbReference type="InParanoid" id="P51589"/>
<dbReference type="OMA" id="LVTKGMH"/>
<dbReference type="OrthoDB" id="2789670at2759"/>
<dbReference type="PAN-GO" id="P51589">
    <property type="GO annotations" value="7 GO annotations based on evolutionary models"/>
</dbReference>
<dbReference type="PhylomeDB" id="P51589"/>
<dbReference type="TreeFam" id="TF352043"/>
<dbReference type="BioCyc" id="MetaCyc:HS05902-MONOMER"/>
<dbReference type="BRENDA" id="1.14.14.24">
    <property type="organism ID" value="2681"/>
</dbReference>
<dbReference type="BRENDA" id="1.14.14.73">
    <property type="organism ID" value="2681"/>
</dbReference>
<dbReference type="BRENDA" id="1.14.14.74">
    <property type="organism ID" value="2681"/>
</dbReference>
<dbReference type="BRENDA" id="1.14.14.75">
    <property type="organism ID" value="2681"/>
</dbReference>
<dbReference type="PathwayCommons" id="P51589"/>
<dbReference type="Reactome" id="R-HSA-211935">
    <property type="pathway name" value="Fatty acids"/>
</dbReference>
<dbReference type="Reactome" id="R-HSA-211981">
    <property type="pathway name" value="Xenobiotics"/>
</dbReference>
<dbReference type="Reactome" id="R-HSA-2142670">
    <property type="pathway name" value="Synthesis of epoxy (EET) and dihydroxyeicosatrienoic acids (DHET)"/>
</dbReference>
<dbReference type="SignaLink" id="P51589"/>
<dbReference type="UniPathway" id="UPA00383"/>
<dbReference type="BioGRID-ORCS" id="1573">
    <property type="hits" value="6 hits in 1147 CRISPR screens"/>
</dbReference>
<dbReference type="ChiTaRS" id="CYP2J2">
    <property type="organism name" value="human"/>
</dbReference>
<dbReference type="GeneWiki" id="CYP2J2"/>
<dbReference type="GenomeRNAi" id="1573"/>
<dbReference type="Pharos" id="P51589">
    <property type="development level" value="Tchem"/>
</dbReference>
<dbReference type="PRO" id="PR:P51589"/>
<dbReference type="Proteomes" id="UP000005640">
    <property type="component" value="Chromosome 1"/>
</dbReference>
<dbReference type="RNAct" id="P51589">
    <property type="molecule type" value="protein"/>
</dbReference>
<dbReference type="Bgee" id="ENSG00000134716">
    <property type="expression patterns" value="Expressed in jejunal mucosa and 167 other cell types or tissues"/>
</dbReference>
<dbReference type="ExpressionAtlas" id="P51589">
    <property type="expression patterns" value="baseline and differential"/>
</dbReference>
<dbReference type="GO" id="GO:0005737">
    <property type="term" value="C:cytoplasm"/>
    <property type="evidence" value="ECO:0000318"/>
    <property type="project" value="GO_Central"/>
</dbReference>
<dbReference type="GO" id="GO:0005789">
    <property type="term" value="C:endoplasmic reticulum membrane"/>
    <property type="evidence" value="ECO:0000304"/>
    <property type="project" value="Reactome"/>
</dbReference>
<dbReference type="GO" id="GO:0070062">
    <property type="term" value="C:extracellular exosome"/>
    <property type="evidence" value="ECO:0007005"/>
    <property type="project" value="UniProtKB"/>
</dbReference>
<dbReference type="GO" id="GO:0043231">
    <property type="term" value="C:intracellular membrane-bounded organelle"/>
    <property type="evidence" value="ECO:0000318"/>
    <property type="project" value="GO_Central"/>
</dbReference>
<dbReference type="GO" id="GO:0008405">
    <property type="term" value="F:arachidonate 11,12-epoxygenase activity"/>
    <property type="evidence" value="ECO:0000314"/>
    <property type="project" value="BHF-UCL"/>
</dbReference>
<dbReference type="GO" id="GO:0008404">
    <property type="term" value="F:arachidonate 14,15-epoxygenase activity"/>
    <property type="evidence" value="ECO:0000314"/>
    <property type="project" value="BHF-UCL"/>
</dbReference>
<dbReference type="GO" id="GO:0106301">
    <property type="term" value="F:arachidonate 5,6-epoxygenase activity"/>
    <property type="evidence" value="ECO:0007669"/>
    <property type="project" value="RHEA"/>
</dbReference>
<dbReference type="GO" id="GO:0008392">
    <property type="term" value="F:arachidonate epoxygenase activity"/>
    <property type="evidence" value="ECO:0000314"/>
    <property type="project" value="UniProtKB"/>
</dbReference>
<dbReference type="GO" id="GO:0020037">
    <property type="term" value="F:heme binding"/>
    <property type="evidence" value="ECO:0000318"/>
    <property type="project" value="GO_Central"/>
</dbReference>
<dbReference type="GO" id="GO:0106255">
    <property type="term" value="F:hydroperoxy icosatetraenoate isomerase activity"/>
    <property type="evidence" value="ECO:0007669"/>
    <property type="project" value="UniProtKB-EC"/>
</dbReference>
<dbReference type="GO" id="GO:0005506">
    <property type="term" value="F:iron ion binding"/>
    <property type="evidence" value="ECO:0007669"/>
    <property type="project" value="InterPro"/>
</dbReference>
<dbReference type="GO" id="GO:0016853">
    <property type="term" value="F:isomerase activity"/>
    <property type="evidence" value="ECO:0000314"/>
    <property type="project" value="UniProtKB"/>
</dbReference>
<dbReference type="GO" id="GO:0071614">
    <property type="term" value="F:linoleic acid epoxygenase activity"/>
    <property type="evidence" value="ECO:0000314"/>
    <property type="project" value="BHF-UCL"/>
</dbReference>
<dbReference type="GO" id="GO:0004497">
    <property type="term" value="F:monooxygenase activity"/>
    <property type="evidence" value="ECO:0000304"/>
    <property type="project" value="Reactome"/>
</dbReference>
<dbReference type="GO" id="GO:0016712">
    <property type="term" value="F:oxidoreductase activity, acting on paired donors, with incorporation or reduction of molecular oxygen, reduced flavin or flavoprotein as one donor, and incorporation of one atom of oxygen"/>
    <property type="evidence" value="ECO:0000318"/>
    <property type="project" value="GO_Central"/>
</dbReference>
<dbReference type="GO" id="GO:0019373">
    <property type="term" value="P:epoxygenase P450 pathway"/>
    <property type="evidence" value="ECO:0000314"/>
    <property type="project" value="UniProtKB"/>
</dbReference>
<dbReference type="GO" id="GO:0006631">
    <property type="term" value="P:fatty acid metabolic process"/>
    <property type="evidence" value="ECO:0000304"/>
    <property type="project" value="Reactome"/>
</dbReference>
<dbReference type="GO" id="GO:0006690">
    <property type="term" value="P:icosanoid metabolic process"/>
    <property type="evidence" value="ECO:0000314"/>
    <property type="project" value="UniProtKB"/>
</dbReference>
<dbReference type="GO" id="GO:0043651">
    <property type="term" value="P:linoleic acid metabolic process"/>
    <property type="evidence" value="ECO:0000314"/>
    <property type="project" value="BHF-UCL"/>
</dbReference>
<dbReference type="GO" id="GO:0006082">
    <property type="term" value="P:organic acid metabolic process"/>
    <property type="evidence" value="ECO:0000318"/>
    <property type="project" value="GO_Central"/>
</dbReference>
<dbReference type="GO" id="GO:0008016">
    <property type="term" value="P:regulation of heart contraction"/>
    <property type="evidence" value="ECO:0000304"/>
    <property type="project" value="ProtInc"/>
</dbReference>
<dbReference type="GO" id="GO:0006805">
    <property type="term" value="P:xenobiotic metabolic process"/>
    <property type="evidence" value="ECO:0000318"/>
    <property type="project" value="GO_Central"/>
</dbReference>
<dbReference type="CDD" id="cd20662">
    <property type="entry name" value="CYP2J"/>
    <property type="match status" value="1"/>
</dbReference>
<dbReference type="FunFam" id="1.10.630.10:FF:000004">
    <property type="entry name" value="cytochrome P450 2D15 isoform X1"/>
    <property type="match status" value="1"/>
</dbReference>
<dbReference type="Gene3D" id="1.10.630.10">
    <property type="entry name" value="Cytochrome P450"/>
    <property type="match status" value="1"/>
</dbReference>
<dbReference type="InterPro" id="IPR001128">
    <property type="entry name" value="Cyt_P450"/>
</dbReference>
<dbReference type="InterPro" id="IPR017972">
    <property type="entry name" value="Cyt_P450_CS"/>
</dbReference>
<dbReference type="InterPro" id="IPR002401">
    <property type="entry name" value="Cyt_P450_E_grp-I"/>
</dbReference>
<dbReference type="InterPro" id="IPR008071">
    <property type="entry name" value="Cyt_P450_E_grp-I_CYP2J-like"/>
</dbReference>
<dbReference type="InterPro" id="IPR036396">
    <property type="entry name" value="Cyt_P450_sf"/>
</dbReference>
<dbReference type="InterPro" id="IPR050182">
    <property type="entry name" value="Cytochrome_P450_fam2"/>
</dbReference>
<dbReference type="PANTHER" id="PTHR24300:SF177">
    <property type="entry name" value="CYTOCHROME P450 2J2"/>
    <property type="match status" value="1"/>
</dbReference>
<dbReference type="PANTHER" id="PTHR24300">
    <property type="entry name" value="CYTOCHROME P450 508A4-RELATED"/>
    <property type="match status" value="1"/>
</dbReference>
<dbReference type="Pfam" id="PF00067">
    <property type="entry name" value="p450"/>
    <property type="match status" value="1"/>
</dbReference>
<dbReference type="PRINTS" id="PR00463">
    <property type="entry name" value="EP450I"/>
</dbReference>
<dbReference type="PRINTS" id="PR01688">
    <property type="entry name" value="EP450ICYP2J"/>
</dbReference>
<dbReference type="PRINTS" id="PR00385">
    <property type="entry name" value="P450"/>
</dbReference>
<dbReference type="SUPFAM" id="SSF48264">
    <property type="entry name" value="Cytochrome P450"/>
    <property type="match status" value="1"/>
</dbReference>
<dbReference type="PROSITE" id="PS00086">
    <property type="entry name" value="CYTOCHROME_P450"/>
    <property type="match status" value="1"/>
</dbReference>
<name>CP2J2_HUMAN</name>
<feature type="chain" id="PRO_0000051769" description="Cytochrome P450 2J2">
    <location>
        <begin position="1"/>
        <end position="502"/>
    </location>
</feature>
<feature type="binding site" description="axial binding residue" evidence="1">
    <location>
        <position position="448"/>
    </location>
    <ligand>
        <name>heme</name>
        <dbReference type="ChEBI" id="CHEBI:30413"/>
    </ligand>
    <ligandPart>
        <name>Fe</name>
        <dbReference type="ChEBI" id="CHEBI:18248"/>
    </ligandPart>
</feature>
<feature type="sequence variant" id="VAR_029159" description="In dbSNP:rs11572190." evidence="8">
    <original>R</original>
    <variation>S</variation>
    <location>
        <position position="49"/>
    </location>
</feature>
<feature type="sequence variant" id="VAR_029160" description="In dbSNP:rs11572242.">
    <original>V</original>
    <variation>M</variation>
    <location>
        <position position="113"/>
    </location>
</feature>
<feature type="sequence variant" id="VAR_022084" description="In dbSNP:rs2228113.">
    <original>N</original>
    <variation>S</variation>
    <location>
        <position position="124"/>
    </location>
</feature>
<feature type="sequence variant" id="VAR_014317" description="In allele CYP2J2*2; significantly reduced metabolism of both arachidonic acid and linoleic acid; dbSNP:rs55753213." evidence="2">
    <original>T</original>
    <variation>A</variation>
    <location>
        <position position="143"/>
    </location>
</feature>
<feature type="sequence variant" id="VAR_014318" description="In allele CYP2J2*3; significantly reduced metabolism of both arachidonic acid and linoleic acid; dbSNP:rs56307989." evidence="2">
    <original>R</original>
    <variation>C</variation>
    <location>
        <position position="158"/>
    </location>
</feature>
<feature type="sequence variant" id="VAR_014319" description="In allele CYP2J2*4; significantly reduced metabolism of arachidonic acid only; dbSNP:rs66515830." evidence="2">
    <original>I</original>
    <variation>N</variation>
    <location>
        <position position="192"/>
    </location>
</feature>
<feature type="sequence variant" id="VAR_014320" description="In allele CYP2J2*5; no change in activity; dbSNP:rs56053398." evidence="2">
    <original>D</original>
    <variation>N</variation>
    <location>
        <position position="342"/>
    </location>
</feature>
<feature type="sequence variant" id="VAR_014321" description="In allele CYP2J2*6; significantly reduced metabolism of both arachidonic acid and linoleic acid; dbSNP:rs72547598." evidence="2">
    <original>N</original>
    <variation>Y</variation>
    <location>
        <position position="404"/>
    </location>
</feature>
<feature type="sequence conflict" description="In Ref. 6; BAG37780." evidence="11" ref="6">
    <original>K</original>
    <variation>E</variation>
    <location>
        <position position="264"/>
    </location>
</feature>
<feature type="sequence conflict" description="In Ref. 6; BAG37780." evidence="11" ref="6">
    <original>T</original>
    <variation>A</variation>
    <location>
        <position position="318"/>
    </location>
</feature>
<feature type="sequence conflict" description="In Ref. 3; BAB85489." evidence="11" ref="3">
    <original>A</original>
    <variation>V</variation>
    <location>
        <position position="339"/>
    </location>
</feature>
<protein>
    <recommendedName>
        <fullName>Cytochrome P450 2J2</fullName>
        <ecNumber evidence="7">1.14.14.-</ecNumber>
    </recommendedName>
    <alternativeName>
        <fullName evidence="11">Albendazole monooxygenase (hydroxylating)</fullName>
        <ecNumber evidence="6">1.14.14.74</ecNumber>
    </alternativeName>
    <alternativeName>
        <fullName evidence="11">Albendazole monooxygenase (sulfoxide-forming)</fullName>
        <ecNumber evidence="4">1.14.14.73</ecNumber>
    </alternativeName>
    <alternativeName>
        <fullName evidence="10">Arachidonic acid epoxygenase</fullName>
    </alternativeName>
    <alternativeName>
        <fullName>CYPIIJ2</fullName>
    </alternativeName>
    <alternativeName>
        <fullName evidence="9">Hydroperoxy icosatetraenoate isomerase</fullName>
        <ecNumber evidence="3">5.4.4.7</ecNumber>
    </alternativeName>
</protein>
<proteinExistence type="evidence at protein level"/>
<gene>
    <name evidence="9 17" type="primary">CYP2J2</name>
</gene>
<evidence type="ECO:0000250" key="1"/>
<evidence type="ECO:0000269" key="2">
    <source>
    </source>
</evidence>
<evidence type="ECO:0000269" key="3">
    <source>
    </source>
</evidence>
<evidence type="ECO:0000269" key="4">
    <source>
    </source>
</evidence>
<evidence type="ECO:0000269" key="5">
    <source>
    </source>
</evidence>
<evidence type="ECO:0000269" key="6">
    <source>
    </source>
</evidence>
<evidence type="ECO:0000269" key="7">
    <source>
    </source>
</evidence>
<evidence type="ECO:0000269" key="8">
    <source ref="5"/>
</evidence>
<evidence type="ECO:0000303" key="9">
    <source>
    </source>
</evidence>
<evidence type="ECO:0000303" key="10">
    <source>
    </source>
</evidence>
<evidence type="ECO:0000305" key="11"/>
<evidence type="ECO:0000305" key="12">
    <source>
    </source>
</evidence>
<evidence type="ECO:0000305" key="13">
    <source>
    </source>
</evidence>
<evidence type="ECO:0000305" key="14">
    <source>
    </source>
</evidence>
<evidence type="ECO:0000305" key="15">
    <source>
    </source>
</evidence>
<evidence type="ECO:0000305" key="16">
    <source>
    </source>
</evidence>
<evidence type="ECO:0000312" key="17">
    <source>
        <dbReference type="HGNC" id="HGNC:2634"/>
    </source>
</evidence>
<reference key="1">
    <citation type="journal article" date="1996" name="J. Biol. Chem.">
        <title>Molecular cloning and expression of CYP2J2, a human cytochrome P450 arachidonic acid epoxygenase highly expressed in heart.</title>
        <authorList>
            <person name="Wu S."/>
            <person name="Moomaw C.R."/>
            <person name="Tomer K.B."/>
            <person name="Falck J.R."/>
            <person name="Zeldin D.C."/>
        </authorList>
    </citation>
    <scope>NUCLEOTIDE SEQUENCE [MRNA]</scope>
    <scope>PROTEIN SEQUENCE OF 1-20</scope>
    <scope>FUNCTION</scope>
    <scope>CATALYTIC ACTIVITY</scope>
    <scope>PATHWAY</scope>
    <scope>TISSUE SPECIFICITY</scope>
    <scope>SUBCELLULAR LOCATION</scope>
    <source>
        <tissue>Liver</tissue>
    </source>
</reference>
<reference key="2">
    <citation type="submission" date="2002-01" db="EMBL/GenBank/DDBJ databases">
        <authorList>
            <person name="Wu S."/>
            <person name="Zeldin D.C."/>
            <person name="Moomaw C.R."/>
            <person name="Tomer K.B."/>
            <person name="Falck J.R."/>
        </authorList>
    </citation>
    <scope>SEQUENCE REVISION TO 339 AND 378</scope>
</reference>
<reference key="3">
    <citation type="journal article" date="2002" name="Drug Metab. Dispos.">
        <title>Involvement of CYP2J2 on the intestinal first-pass metabolism of antihistamine drug, astemizole.</title>
        <authorList>
            <person name="Matsumoto S."/>
            <person name="Hirama T."/>
            <person name="Matsubara T."/>
            <person name="Nagata K."/>
            <person name="Yamazoe Y."/>
        </authorList>
    </citation>
    <scope>NUCLEOTIDE SEQUENCE [MRNA]</scope>
</reference>
<reference key="4">
    <citation type="journal article" date="2002" name="Mol. Pharmacol.">
        <title>Cloning of CYP2J2 gene and identification of functional polymorphisms.</title>
        <authorList>
            <person name="King L.M."/>
            <person name="Ma J."/>
            <person name="Srettabunjong S."/>
            <person name="Graves J."/>
            <person name="Bradbury J.A."/>
            <person name="Li L."/>
            <person name="Spiecker M."/>
            <person name="Liao J.K."/>
            <person name="Mohrenweiser H."/>
            <person name="Zeldin D.C."/>
        </authorList>
    </citation>
    <scope>NUCLEOTIDE SEQUENCE [GENOMIC DNA]</scope>
    <scope>VARIANTS ALA-143; CYS-158; ASN-192; ASN-342 AND TYR-404</scope>
    <scope>CHARACTERIZATION OF VARIANTS</scope>
</reference>
<reference key="5">
    <citation type="submission" date="2003-10" db="EMBL/GenBank/DDBJ databases">
        <authorList>
            <consortium name="NIEHS SNPs program"/>
        </authorList>
    </citation>
    <scope>NUCLEOTIDE SEQUENCE [GENOMIC DNA]</scope>
    <scope>VARIANT SER-49</scope>
</reference>
<reference key="6">
    <citation type="journal article" date="2004" name="Nat. Genet.">
        <title>Complete sequencing and characterization of 21,243 full-length human cDNAs.</title>
        <authorList>
            <person name="Ota T."/>
            <person name="Suzuki Y."/>
            <person name="Nishikawa T."/>
            <person name="Otsuki T."/>
            <person name="Sugiyama T."/>
            <person name="Irie R."/>
            <person name="Wakamatsu A."/>
            <person name="Hayashi K."/>
            <person name="Sato H."/>
            <person name="Nagai K."/>
            <person name="Kimura K."/>
            <person name="Makita H."/>
            <person name="Sekine M."/>
            <person name="Obayashi M."/>
            <person name="Nishi T."/>
            <person name="Shibahara T."/>
            <person name="Tanaka T."/>
            <person name="Ishii S."/>
            <person name="Yamamoto J."/>
            <person name="Saito K."/>
            <person name="Kawai Y."/>
            <person name="Isono Y."/>
            <person name="Nakamura Y."/>
            <person name="Nagahari K."/>
            <person name="Murakami K."/>
            <person name="Yasuda T."/>
            <person name="Iwayanagi T."/>
            <person name="Wagatsuma M."/>
            <person name="Shiratori A."/>
            <person name="Sudo H."/>
            <person name="Hosoiri T."/>
            <person name="Kaku Y."/>
            <person name="Kodaira H."/>
            <person name="Kondo H."/>
            <person name="Sugawara M."/>
            <person name="Takahashi M."/>
            <person name="Kanda K."/>
            <person name="Yokoi T."/>
            <person name="Furuya T."/>
            <person name="Kikkawa E."/>
            <person name="Omura Y."/>
            <person name="Abe K."/>
            <person name="Kamihara K."/>
            <person name="Katsuta N."/>
            <person name="Sato K."/>
            <person name="Tanikawa M."/>
            <person name="Yamazaki M."/>
            <person name="Ninomiya K."/>
            <person name="Ishibashi T."/>
            <person name="Yamashita H."/>
            <person name="Murakawa K."/>
            <person name="Fujimori K."/>
            <person name="Tanai H."/>
            <person name="Kimata M."/>
            <person name="Watanabe M."/>
            <person name="Hiraoka S."/>
            <person name="Chiba Y."/>
            <person name="Ishida S."/>
            <person name="Ono Y."/>
            <person name="Takiguchi S."/>
            <person name="Watanabe S."/>
            <person name="Yosida M."/>
            <person name="Hotuta T."/>
            <person name="Kusano J."/>
            <person name="Kanehori K."/>
            <person name="Takahashi-Fujii A."/>
            <person name="Hara H."/>
            <person name="Tanase T.-O."/>
            <person name="Nomura Y."/>
            <person name="Togiya S."/>
            <person name="Komai F."/>
            <person name="Hara R."/>
            <person name="Takeuchi K."/>
            <person name="Arita M."/>
            <person name="Imose N."/>
            <person name="Musashino K."/>
            <person name="Yuuki H."/>
            <person name="Oshima A."/>
            <person name="Sasaki N."/>
            <person name="Aotsuka S."/>
            <person name="Yoshikawa Y."/>
            <person name="Matsunawa H."/>
            <person name="Ichihara T."/>
            <person name="Shiohata N."/>
            <person name="Sano S."/>
            <person name="Moriya S."/>
            <person name="Momiyama H."/>
            <person name="Satoh N."/>
            <person name="Takami S."/>
            <person name="Terashima Y."/>
            <person name="Suzuki O."/>
            <person name="Nakagawa S."/>
            <person name="Senoh A."/>
            <person name="Mizoguchi H."/>
            <person name="Goto Y."/>
            <person name="Shimizu F."/>
            <person name="Wakebe H."/>
            <person name="Hishigaki H."/>
            <person name="Watanabe T."/>
            <person name="Sugiyama A."/>
            <person name="Takemoto M."/>
            <person name="Kawakami B."/>
            <person name="Yamazaki M."/>
            <person name="Watanabe K."/>
            <person name="Kumagai A."/>
            <person name="Itakura S."/>
            <person name="Fukuzumi Y."/>
            <person name="Fujimori Y."/>
            <person name="Komiyama M."/>
            <person name="Tashiro H."/>
            <person name="Tanigami A."/>
            <person name="Fujiwara T."/>
            <person name="Ono T."/>
            <person name="Yamada K."/>
            <person name="Fujii Y."/>
            <person name="Ozaki K."/>
            <person name="Hirao M."/>
            <person name="Ohmori Y."/>
            <person name="Kawabata A."/>
            <person name="Hikiji T."/>
            <person name="Kobatake N."/>
            <person name="Inagaki H."/>
            <person name="Ikema Y."/>
            <person name="Okamoto S."/>
            <person name="Okitani R."/>
            <person name="Kawakami T."/>
            <person name="Noguchi S."/>
            <person name="Itoh T."/>
            <person name="Shigeta K."/>
            <person name="Senba T."/>
            <person name="Matsumura K."/>
            <person name="Nakajima Y."/>
            <person name="Mizuno T."/>
            <person name="Morinaga M."/>
            <person name="Sasaki M."/>
            <person name="Togashi T."/>
            <person name="Oyama M."/>
            <person name="Hata H."/>
            <person name="Watanabe M."/>
            <person name="Komatsu T."/>
            <person name="Mizushima-Sugano J."/>
            <person name="Satoh T."/>
            <person name="Shirai Y."/>
            <person name="Takahashi Y."/>
            <person name="Nakagawa K."/>
            <person name="Okumura K."/>
            <person name="Nagase T."/>
            <person name="Nomura N."/>
            <person name="Kikuchi H."/>
            <person name="Masuho Y."/>
            <person name="Yamashita R."/>
            <person name="Nakai K."/>
            <person name="Yada T."/>
            <person name="Nakamura Y."/>
            <person name="Ohara O."/>
            <person name="Isogai T."/>
            <person name="Sugano S."/>
        </authorList>
    </citation>
    <scope>NUCLEOTIDE SEQUENCE [LARGE SCALE MRNA]</scope>
    <source>
        <tissue>Corpus callosum</tissue>
    </source>
</reference>
<reference key="7">
    <citation type="journal article" date="2004" name="Genome Res.">
        <title>The status, quality, and expansion of the NIH full-length cDNA project: the Mammalian Gene Collection (MGC).</title>
        <authorList>
            <consortium name="The MGC Project Team"/>
        </authorList>
    </citation>
    <scope>NUCLEOTIDE SEQUENCE [LARGE SCALE MRNA]</scope>
    <source>
        <tissue>Skin</tissue>
    </source>
</reference>
<reference key="8">
    <citation type="journal article" date="2009" name="J. Biol. Chem.">
        <title>Identification of 13-hydroxy-14,15-epoxyeicosatrienoic acid as an acid-stable endothelium-derived hyperpolarizing factor in rabbit arteries.</title>
        <authorList>
            <person name="Chawengsub Y."/>
            <person name="Gauthier K.M."/>
            <person name="Nithipatikom K."/>
            <person name="Hammock B.D."/>
            <person name="Falck J.R."/>
            <person name="Narsimhaswamy D."/>
            <person name="Campbell W.B."/>
        </authorList>
    </citation>
    <scope>FUNCTION</scope>
    <scope>CATALYTIC ACTIVITY</scope>
    <scope>PATHWAY</scope>
    <scope>TISSUE SPECIFICITY</scope>
</reference>
<reference key="9">
    <citation type="journal article" date="2010" name="Drug Metab. Dispos.">
        <title>Identification of novel substrates for human cytochrome P450 2J2.</title>
        <authorList>
            <person name="Lee C.A."/>
            <person name="Neul D."/>
            <person name="Clouser-Roche A."/>
            <person name="Dalvie D."/>
            <person name="Wester M.R."/>
            <person name="Jiang Y."/>
            <person name="Jones J.P. III"/>
            <person name="Freiwald S."/>
            <person name="Zientek M."/>
            <person name="Totah R.A."/>
        </authorList>
    </citation>
    <scope>FUNCTION</scope>
    <scope>CATALYTIC ACTIVITY</scope>
</reference>
<reference key="10">
    <citation type="journal article" date="2013" name="Antimicrob. Agents Chemother.">
        <title>CYP2J2 and CYP2C19 are the major enzymes responsible for metabolism of albendazole and fenbendazole in human liver microsomes and recombinant P450 assay systems.</title>
        <authorList>
            <person name="Wu Z."/>
            <person name="Lee D."/>
            <person name="Joo J."/>
            <person name="Shin J.H."/>
            <person name="Kang W."/>
            <person name="Oh S."/>
            <person name="Lee D.Y."/>
            <person name="Lee S.J."/>
            <person name="Yea S.S."/>
            <person name="Lee H.S."/>
            <person name="Lee T."/>
            <person name="Liu K.H."/>
        </authorList>
    </citation>
    <scope>FUNCTION AS ALBENDAZOLE MONOOXYGENASE (HYDROXYLATION)</scope>
    <scope>CATALYTIC ACTIVITY</scope>
</reference>
<reference key="11">
    <citation type="journal article" date="2014" name="J. Proteomics">
        <title>An enzyme assisted RP-RPLC approach for in-depth analysis of human liver phosphoproteome.</title>
        <authorList>
            <person name="Bian Y."/>
            <person name="Song C."/>
            <person name="Cheng K."/>
            <person name="Dong M."/>
            <person name="Wang F."/>
            <person name="Huang J."/>
            <person name="Sun D."/>
            <person name="Wang L."/>
            <person name="Ye M."/>
            <person name="Zou H."/>
        </authorList>
    </citation>
    <scope>IDENTIFICATION BY MASS SPECTROMETRY [LARGE SCALE ANALYSIS]</scope>
    <source>
        <tissue>Liver</tissue>
    </source>
</reference>
<reference key="12">
    <citation type="journal article" date="2010" name="J. Lipid Res.">
        <title>Stereoselective epoxidation of the last double bond of polyunsaturated fatty acids by human cytochromes P450.</title>
        <authorList>
            <person name="Lucas D."/>
            <person name="Goulitquer S."/>
            <person name="Marienhagen J."/>
            <person name="Fer M."/>
            <person name="Dreano Y."/>
            <person name="Schwaneberg U."/>
            <person name="Amet Y."/>
            <person name="Corcos L."/>
        </authorList>
    </citation>
    <scope>FUNCTION</scope>
    <scope>CATALYTIC ACTIVITY</scope>
    <scope>PATHWAY</scope>
</reference>
<keyword id="KW-0903">Direct protein sequencing</keyword>
<keyword id="KW-0256">Endoplasmic reticulum</keyword>
<keyword id="KW-0276">Fatty acid metabolism</keyword>
<keyword id="KW-0349">Heme</keyword>
<keyword id="KW-0408">Iron</keyword>
<keyword id="KW-0413">Isomerase</keyword>
<keyword id="KW-0443">Lipid metabolism</keyword>
<keyword id="KW-0472">Membrane</keyword>
<keyword id="KW-0479">Metal-binding</keyword>
<keyword id="KW-0492">Microsome</keyword>
<keyword id="KW-0503">Monooxygenase</keyword>
<keyword id="KW-0560">Oxidoreductase</keyword>
<keyword id="KW-1267">Proteomics identification</keyword>
<keyword id="KW-1185">Reference proteome</keyword>
<comment type="function">
    <text evidence="3 4 5 6 7">A cytochrome P450 monooxygenase involved in the metabolism of polyunsaturated fatty acids (PUFA) in the cardiovascular system (PubMed:19965576, PubMed:8631948). Mechanistically, uses molecular oxygen inserting one oxygen atom into a substrate, and reducing the second into a water molecule, with two electrons provided by NADPH via cytochrome P450 reductase (NADPH--hemoprotein reductase) (PubMed:19965576, PubMed:8631948). Catalyzes the epoxidation of double bonds of PUFA (PubMed:19965576, PubMed:8631948). Converts arachidonic acid to four regioisomeric epoxyeicosatrienoic acids (EpETrE), likely playing a major role in the epoxidation of endogenous cardiac arachidonic acid pools (PubMed:8631948). In endothelial cells, participates in eicosanoids metabolism by converting hydroperoxide species into hydroxy epoxy metabolites. In combination with 15-lipoxygenase metabolizes arachidonic acid and converts hydroperoxyicosatetraenoates (HpETEs) into hydroxy epoxy eicosatrienoates (HEETs), which are precursors of vasodilatory trihydroxyicosatrienoic acids (THETAs). This hydroperoxide isomerase activity is NADPH- and O2-independent (PubMed:19737933). Catalyzes the monooxygenation of a various xenobiotics, such as danazol, amiodarone, terfenadine, astemizole, thioridazine, tamoxifen, cyclosporin A and nabumetone (PubMed:19923256). Catalyzes hydroxylation of the anthelmintics albendazole and fenbendazole (PubMed:23959307). Catalyzes the sulfoxidation of fenbedazole (PubMed:19923256).</text>
</comment>
<comment type="catalytic activity">
    <reaction evidence="7">
        <text>(5Z,8Z,11Z,14Z)-eicosatetraenoate + reduced [NADPH--hemoprotein reductase] + O2 = 5,6-epoxy-(8Z,11Z,14Z)-eicosatrienoate + oxidized [NADPH--hemoprotein reductase] + H2O + H(+)</text>
        <dbReference type="Rhea" id="RHEA:49936"/>
        <dbReference type="Rhea" id="RHEA-COMP:11964"/>
        <dbReference type="Rhea" id="RHEA-COMP:11965"/>
        <dbReference type="ChEBI" id="CHEBI:15377"/>
        <dbReference type="ChEBI" id="CHEBI:15378"/>
        <dbReference type="ChEBI" id="CHEBI:15379"/>
        <dbReference type="ChEBI" id="CHEBI:32395"/>
        <dbReference type="ChEBI" id="CHEBI:57618"/>
        <dbReference type="ChEBI" id="CHEBI:58210"/>
        <dbReference type="ChEBI" id="CHEBI:131992"/>
    </reaction>
    <physiologicalReaction direction="left-to-right" evidence="16">
        <dbReference type="Rhea" id="RHEA:49937"/>
    </physiologicalReaction>
</comment>
<comment type="catalytic activity">
    <reaction evidence="7">
        <text>(5Z,8Z,11Z,14Z)-eicosatetraenoate + reduced [NADPH--hemoprotein reductase] + O2 = (8R,9S)-epoxy-(5Z,11Z,14Z)-eicosatrienoate + oxidized [NADPH--hemoprotein reductase] + H2O + H(+)</text>
        <dbReference type="Rhea" id="RHEA:49884"/>
        <dbReference type="Rhea" id="RHEA-COMP:11964"/>
        <dbReference type="Rhea" id="RHEA-COMP:11965"/>
        <dbReference type="ChEBI" id="CHEBI:15377"/>
        <dbReference type="ChEBI" id="CHEBI:15378"/>
        <dbReference type="ChEBI" id="CHEBI:15379"/>
        <dbReference type="ChEBI" id="CHEBI:32395"/>
        <dbReference type="ChEBI" id="CHEBI:57618"/>
        <dbReference type="ChEBI" id="CHEBI:58210"/>
        <dbReference type="ChEBI" id="CHEBI:131975"/>
    </reaction>
    <physiologicalReaction direction="left-to-right" evidence="16">
        <dbReference type="Rhea" id="RHEA:49885"/>
    </physiologicalReaction>
</comment>
<comment type="catalytic activity">
    <reaction evidence="7">
        <text>(5Z,8Z,11Z,14Z)-eicosatetraenoate + reduced [NADPH--hemoprotein reductase] + O2 = (8S,9R)-epoxy-(5Z,11Z,14Z)-eicosatrienoate + oxidized [NADPH--hemoprotein reductase] + H2O + H(+)</text>
        <dbReference type="Rhea" id="RHEA:49928"/>
        <dbReference type="Rhea" id="RHEA-COMP:11964"/>
        <dbReference type="Rhea" id="RHEA-COMP:11965"/>
        <dbReference type="ChEBI" id="CHEBI:15377"/>
        <dbReference type="ChEBI" id="CHEBI:15378"/>
        <dbReference type="ChEBI" id="CHEBI:15379"/>
        <dbReference type="ChEBI" id="CHEBI:32395"/>
        <dbReference type="ChEBI" id="CHEBI:57618"/>
        <dbReference type="ChEBI" id="CHEBI:58210"/>
        <dbReference type="ChEBI" id="CHEBI:131974"/>
    </reaction>
    <physiologicalReaction direction="left-to-right" evidence="16">
        <dbReference type="Rhea" id="RHEA:49929"/>
    </physiologicalReaction>
</comment>
<comment type="catalytic activity">
    <reaction evidence="7">
        <text>(5Z,8Z,11Z,14Z)-eicosatetraenoate + reduced [NADPH--hemoprotein reductase] + O2 = (11R,12S)-epoxy-(5Z,8Z,14Z)-eicosatrienoate + oxidized [NADPH--hemoprotein reductase] + H2O + H(+)</text>
        <dbReference type="Rhea" id="RHEA:49880"/>
        <dbReference type="Rhea" id="RHEA-COMP:11964"/>
        <dbReference type="Rhea" id="RHEA-COMP:11965"/>
        <dbReference type="ChEBI" id="CHEBI:15377"/>
        <dbReference type="ChEBI" id="CHEBI:15378"/>
        <dbReference type="ChEBI" id="CHEBI:15379"/>
        <dbReference type="ChEBI" id="CHEBI:32395"/>
        <dbReference type="ChEBI" id="CHEBI:57618"/>
        <dbReference type="ChEBI" id="CHEBI:58210"/>
        <dbReference type="ChEBI" id="CHEBI:131970"/>
    </reaction>
    <physiologicalReaction direction="left-to-right" evidence="16">
        <dbReference type="Rhea" id="RHEA:49881"/>
    </physiologicalReaction>
</comment>
<comment type="catalytic activity">
    <reaction evidence="7">
        <text>(5Z,8Z,11Z,14Z)-eicosatetraenoate + reduced [NADPH--hemoprotein reductase] + O2 = (11S,12R)-epoxy-(5Z,8Z,14Z)-eicosatrienoate + oxidized [NADPH--hemoprotein reductase] + H2O + H(+)</text>
        <dbReference type="Rhea" id="RHEA:49876"/>
        <dbReference type="Rhea" id="RHEA-COMP:11964"/>
        <dbReference type="Rhea" id="RHEA-COMP:11965"/>
        <dbReference type="ChEBI" id="CHEBI:15377"/>
        <dbReference type="ChEBI" id="CHEBI:15378"/>
        <dbReference type="ChEBI" id="CHEBI:15379"/>
        <dbReference type="ChEBI" id="CHEBI:32395"/>
        <dbReference type="ChEBI" id="CHEBI:57618"/>
        <dbReference type="ChEBI" id="CHEBI:58210"/>
        <dbReference type="ChEBI" id="CHEBI:131969"/>
    </reaction>
    <physiologicalReaction direction="left-to-right" evidence="16">
        <dbReference type="Rhea" id="RHEA:49877"/>
    </physiologicalReaction>
</comment>
<comment type="catalytic activity">
    <reaction evidence="5 7">
        <text>(5Z,8Z,11Z,14Z)-eicosatetraenoate + reduced [NADPH--hemoprotein reductase] + O2 = (14R,15S)-epoxy-(5Z,8Z,11Z)-eicosatrienoate + oxidized [NADPH--hemoprotein reductase] + H2O + H(+)</text>
        <dbReference type="Rhea" id="RHEA:49860"/>
        <dbReference type="Rhea" id="RHEA-COMP:11964"/>
        <dbReference type="Rhea" id="RHEA-COMP:11965"/>
        <dbReference type="ChEBI" id="CHEBI:15377"/>
        <dbReference type="ChEBI" id="CHEBI:15378"/>
        <dbReference type="ChEBI" id="CHEBI:15379"/>
        <dbReference type="ChEBI" id="CHEBI:32395"/>
        <dbReference type="ChEBI" id="CHEBI:57618"/>
        <dbReference type="ChEBI" id="CHEBI:58210"/>
        <dbReference type="ChEBI" id="CHEBI:131965"/>
    </reaction>
    <physiologicalReaction direction="left-to-right" evidence="16">
        <dbReference type="Rhea" id="RHEA:49861"/>
    </physiologicalReaction>
</comment>
<comment type="catalytic activity">
    <reaction evidence="5 7">
        <text>(5Z,8Z,11Z,14Z)-eicosatetraenoate + reduced [NADPH--hemoprotein reductase] + O2 = (14S,15R)-epoxy-(5Z,8Z,11Z)-eicosatrienoate + oxidized [NADPH--hemoprotein reductase] + H2O + H(+)</text>
        <dbReference type="Rhea" id="RHEA:49856"/>
        <dbReference type="Rhea" id="RHEA-COMP:11964"/>
        <dbReference type="Rhea" id="RHEA-COMP:11965"/>
        <dbReference type="ChEBI" id="CHEBI:15377"/>
        <dbReference type="ChEBI" id="CHEBI:15378"/>
        <dbReference type="ChEBI" id="CHEBI:15379"/>
        <dbReference type="ChEBI" id="CHEBI:32395"/>
        <dbReference type="ChEBI" id="CHEBI:57618"/>
        <dbReference type="ChEBI" id="CHEBI:58210"/>
        <dbReference type="ChEBI" id="CHEBI:131964"/>
    </reaction>
    <physiologicalReaction direction="left-to-right" evidence="16">
        <dbReference type="Rhea" id="RHEA:49857"/>
    </physiologicalReaction>
</comment>
<comment type="catalytic activity">
    <reaction evidence="3">
        <text>(15S)-hydroperoxy-(5Z,8Z,11Z,13E)-eicosatetraenoate = (13S)-hydroxy-(14S,15S)-epoxy-(5Z,8Z,11Z)-eicosatrienoate</text>
        <dbReference type="Rhea" id="RHEA:53400"/>
        <dbReference type="ChEBI" id="CHEBI:57446"/>
        <dbReference type="ChEBI" id="CHEBI:137320"/>
    </reaction>
    <physiologicalReaction direction="left-to-right" evidence="12">
        <dbReference type="Rhea" id="RHEA:53401"/>
    </physiologicalReaction>
</comment>
<comment type="catalytic activity">
    <reaction evidence="3">
        <text>(15S)-hydroperoxy-(5Z,8Z,11Z,13E)-eicosatetraenoate = (13R)-hydroxy-(14S,15S)-epoxy-(5Z,8Z,11Z)-eicosatrienoate</text>
        <dbReference type="Rhea" id="RHEA:37959"/>
        <dbReference type="ChEBI" id="CHEBI:57446"/>
        <dbReference type="ChEBI" id="CHEBI:75235"/>
        <dbReference type="EC" id="5.4.4.7"/>
    </reaction>
    <physiologicalReaction direction="left-to-right" evidence="12">
        <dbReference type="Rhea" id="RHEA:37960"/>
    </physiologicalReaction>
</comment>
<comment type="catalytic activity">
    <reaction evidence="5">
        <text>(5Z,8Z,11Z,14Z,17Z)-eicosapentaenoate + reduced [NADPH--hemoprotein reductase] + O2 = (17R,18S)-epoxy-(5Z,8Z,11Z,14Z)-eicosatetraenoate + oxidized [NADPH--hemoprotein reductase] + H2O + H(+)</text>
        <dbReference type="Rhea" id="RHEA:39779"/>
        <dbReference type="Rhea" id="RHEA-COMP:11964"/>
        <dbReference type="Rhea" id="RHEA-COMP:11965"/>
        <dbReference type="ChEBI" id="CHEBI:15377"/>
        <dbReference type="ChEBI" id="CHEBI:15378"/>
        <dbReference type="ChEBI" id="CHEBI:15379"/>
        <dbReference type="ChEBI" id="CHEBI:57618"/>
        <dbReference type="ChEBI" id="CHEBI:58210"/>
        <dbReference type="ChEBI" id="CHEBI:58562"/>
        <dbReference type="ChEBI" id="CHEBI:76634"/>
    </reaction>
    <physiologicalReaction direction="left-to-right" evidence="14">
        <dbReference type="Rhea" id="RHEA:39780"/>
    </physiologicalReaction>
</comment>
<comment type="catalytic activity">
    <reaction evidence="5">
        <text>(5Z,8Z,11Z,14Z,17Z)-eicosapentaenoate + reduced [NADPH--hemoprotein reductase] + O2 = (17S,18R)-epoxy-(5Z,8Z,11Z,14Z)-eicosatetraenoate + oxidized [NADPH--hemoprotein reductase] + H2O + H(+)</text>
        <dbReference type="Rhea" id="RHEA:39783"/>
        <dbReference type="Rhea" id="RHEA-COMP:11964"/>
        <dbReference type="Rhea" id="RHEA-COMP:11965"/>
        <dbReference type="ChEBI" id="CHEBI:15377"/>
        <dbReference type="ChEBI" id="CHEBI:15378"/>
        <dbReference type="ChEBI" id="CHEBI:15379"/>
        <dbReference type="ChEBI" id="CHEBI:57618"/>
        <dbReference type="ChEBI" id="CHEBI:58210"/>
        <dbReference type="ChEBI" id="CHEBI:58562"/>
        <dbReference type="ChEBI" id="CHEBI:76635"/>
    </reaction>
    <physiologicalReaction direction="left-to-right" evidence="14">
        <dbReference type="Rhea" id="RHEA:39784"/>
    </physiologicalReaction>
</comment>
<comment type="catalytic activity">
    <reaction evidence="5">
        <text>(4Z,7Z,10Z,13Z,16Z,19Z)-docosahexaenoate + reduced [NADPH--hemoprotein reductase] + O2 = (19R,20S)-epoxy-(4Z,7Z,10Z,13Z,16Z)-docosapentaenoate + oxidized [NADPH--hemoprotein reductase] + H2O + H(+)</text>
        <dbReference type="Rhea" id="RHEA:52120"/>
        <dbReference type="Rhea" id="RHEA-COMP:11964"/>
        <dbReference type="Rhea" id="RHEA-COMP:11965"/>
        <dbReference type="ChEBI" id="CHEBI:15377"/>
        <dbReference type="ChEBI" id="CHEBI:15378"/>
        <dbReference type="ChEBI" id="CHEBI:15379"/>
        <dbReference type="ChEBI" id="CHEBI:57618"/>
        <dbReference type="ChEBI" id="CHEBI:58210"/>
        <dbReference type="ChEBI" id="CHEBI:77016"/>
        <dbReference type="ChEBI" id="CHEBI:136410"/>
    </reaction>
    <physiologicalReaction direction="left-to-right" evidence="14">
        <dbReference type="Rhea" id="RHEA:52121"/>
    </physiologicalReaction>
</comment>
<comment type="catalytic activity">
    <reaction evidence="5">
        <text>(4Z,7Z,10Z,13Z,16Z,19Z)-docosahexaenoate + reduced [NADPH--hemoprotein reductase] + O2 = (19S,20R)-epoxy-(4Z,7Z,10Z,13Z,16Z)-docosapentaenoate + oxidized [NADPH--hemoprotein reductase] + H2O + H(+)</text>
        <dbReference type="Rhea" id="RHEA:52124"/>
        <dbReference type="Rhea" id="RHEA-COMP:11964"/>
        <dbReference type="Rhea" id="RHEA-COMP:11965"/>
        <dbReference type="ChEBI" id="CHEBI:15377"/>
        <dbReference type="ChEBI" id="CHEBI:15378"/>
        <dbReference type="ChEBI" id="CHEBI:15379"/>
        <dbReference type="ChEBI" id="CHEBI:57618"/>
        <dbReference type="ChEBI" id="CHEBI:58210"/>
        <dbReference type="ChEBI" id="CHEBI:77016"/>
        <dbReference type="ChEBI" id="CHEBI:136411"/>
    </reaction>
    <physiologicalReaction direction="left-to-right" evidence="14">
        <dbReference type="Rhea" id="RHEA:52125"/>
    </physiologicalReaction>
</comment>
<comment type="catalytic activity">
    <reaction evidence="6">
        <text>albendazole + reduced [NADPH--hemoprotein reductase] + O2 = hydroxyalbendazole + oxidized [NADPH--hemoprotein reductase] + H2O + H(+)</text>
        <dbReference type="Rhea" id="RHEA:56288"/>
        <dbReference type="Rhea" id="RHEA-COMP:11964"/>
        <dbReference type="Rhea" id="RHEA-COMP:11965"/>
        <dbReference type="ChEBI" id="CHEBI:15377"/>
        <dbReference type="ChEBI" id="CHEBI:15378"/>
        <dbReference type="ChEBI" id="CHEBI:15379"/>
        <dbReference type="ChEBI" id="CHEBI:16664"/>
        <dbReference type="ChEBI" id="CHEBI:57618"/>
        <dbReference type="ChEBI" id="CHEBI:58210"/>
        <dbReference type="ChEBI" id="CHEBI:140182"/>
        <dbReference type="EC" id="1.14.14.74"/>
    </reaction>
    <physiologicalReaction direction="left-to-right" evidence="15">
        <dbReference type="Rhea" id="RHEA:56289"/>
    </physiologicalReaction>
</comment>
<comment type="catalytic activity">
    <reaction evidence="4">
        <text>albendazole + reduced [NADPH--hemoprotein reductase] + O2 = albendazole S-oxide + oxidized [NADPH--hemoprotein reductase] + H2O + H(+)</text>
        <dbReference type="Rhea" id="RHEA:55924"/>
        <dbReference type="Rhea" id="RHEA-COMP:11964"/>
        <dbReference type="Rhea" id="RHEA-COMP:11965"/>
        <dbReference type="ChEBI" id="CHEBI:15377"/>
        <dbReference type="ChEBI" id="CHEBI:15378"/>
        <dbReference type="ChEBI" id="CHEBI:15379"/>
        <dbReference type="ChEBI" id="CHEBI:16664"/>
        <dbReference type="ChEBI" id="CHEBI:16959"/>
        <dbReference type="ChEBI" id="CHEBI:57618"/>
        <dbReference type="ChEBI" id="CHEBI:58210"/>
        <dbReference type="EC" id="1.14.14.73"/>
    </reaction>
    <physiologicalReaction direction="left-to-right" evidence="13">
        <dbReference type="Rhea" id="RHEA:55925"/>
    </physiologicalReaction>
</comment>
<comment type="catalytic activity">
    <reaction evidence="6">
        <text>fenbendazole + reduced [NADPH--hemoprotein reductase] + O2 = fenbendazole S-oxide + oxidized [NADPH--hemoprotein reductase] + H2O + H(+)</text>
        <dbReference type="Rhea" id="RHEA:55928"/>
        <dbReference type="Rhea" id="RHEA-COMP:11964"/>
        <dbReference type="Rhea" id="RHEA-COMP:11965"/>
        <dbReference type="ChEBI" id="CHEBI:15377"/>
        <dbReference type="ChEBI" id="CHEBI:15378"/>
        <dbReference type="ChEBI" id="CHEBI:15379"/>
        <dbReference type="ChEBI" id="CHEBI:35812"/>
        <dbReference type="ChEBI" id="CHEBI:57618"/>
        <dbReference type="ChEBI" id="CHEBI:58210"/>
        <dbReference type="ChEBI" id="CHEBI:77092"/>
    </reaction>
    <physiologicalReaction direction="left-to-right" evidence="15">
        <dbReference type="Rhea" id="RHEA:55929"/>
    </physiologicalReaction>
</comment>
<comment type="cofactor">
    <cofactor evidence="1">
        <name>heme</name>
        <dbReference type="ChEBI" id="CHEBI:30413"/>
    </cofactor>
</comment>
<comment type="pathway">
    <text evidence="3 5 7">Lipid metabolism; arachidonate metabolism.</text>
</comment>
<comment type="subcellular location">
    <subcellularLocation>
        <location>Endoplasmic reticulum membrane</location>
        <topology>Peripheral membrane protein</topology>
    </subcellularLocation>
    <subcellularLocation>
        <location evidence="7">Microsome membrane</location>
        <topology>Peripheral membrane protein</topology>
    </subcellularLocation>
</comment>
<comment type="tissue specificity">
    <text evidence="7">Highly expressed in heart, present at lower levels in liver, kidney and skeletal muscle (at protein level).</text>
</comment>
<comment type="similarity">
    <text evidence="11">Belongs to the cytochrome P450 family.</text>
</comment>
<comment type="online information" name="PharmVar Pharmacogen Variation Consortium">
    <link uri="https://www.pharmvar.org/gene/CYP2J2"/>
    <text>CYP2J2 alleles</text>
</comment>
<organism>
    <name type="scientific">Homo sapiens</name>
    <name type="common">Human</name>
    <dbReference type="NCBI Taxonomy" id="9606"/>
    <lineage>
        <taxon>Eukaryota</taxon>
        <taxon>Metazoa</taxon>
        <taxon>Chordata</taxon>
        <taxon>Craniata</taxon>
        <taxon>Vertebrata</taxon>
        <taxon>Euteleostomi</taxon>
        <taxon>Mammalia</taxon>
        <taxon>Eutheria</taxon>
        <taxon>Euarchontoglires</taxon>
        <taxon>Primates</taxon>
        <taxon>Haplorrhini</taxon>
        <taxon>Catarrhini</taxon>
        <taxon>Hominidae</taxon>
        <taxon>Homo</taxon>
    </lineage>
</organism>